<name>ASSY_STAA1</name>
<comment type="catalytic activity">
    <reaction evidence="1">
        <text>L-citrulline + L-aspartate + ATP = 2-(N(omega)-L-arginino)succinate + AMP + diphosphate + H(+)</text>
        <dbReference type="Rhea" id="RHEA:10932"/>
        <dbReference type="ChEBI" id="CHEBI:15378"/>
        <dbReference type="ChEBI" id="CHEBI:29991"/>
        <dbReference type="ChEBI" id="CHEBI:30616"/>
        <dbReference type="ChEBI" id="CHEBI:33019"/>
        <dbReference type="ChEBI" id="CHEBI:57472"/>
        <dbReference type="ChEBI" id="CHEBI:57743"/>
        <dbReference type="ChEBI" id="CHEBI:456215"/>
        <dbReference type="EC" id="6.3.4.5"/>
    </reaction>
</comment>
<comment type="pathway">
    <text evidence="1">Amino-acid biosynthesis; L-arginine biosynthesis; L-arginine from L-ornithine and carbamoyl phosphate: step 2/3.</text>
</comment>
<comment type="subunit">
    <text evidence="1">Homotetramer.</text>
</comment>
<comment type="subcellular location">
    <subcellularLocation>
        <location evidence="1">Cytoplasm</location>
    </subcellularLocation>
</comment>
<comment type="similarity">
    <text evidence="1">Belongs to the argininosuccinate synthase family. Type 1 subfamily.</text>
</comment>
<keyword id="KW-0028">Amino-acid biosynthesis</keyword>
<keyword id="KW-0055">Arginine biosynthesis</keyword>
<keyword id="KW-0067">ATP-binding</keyword>
<keyword id="KW-0963">Cytoplasm</keyword>
<keyword id="KW-0436">Ligase</keyword>
<keyword id="KW-0547">Nucleotide-binding</keyword>
<reference key="1">
    <citation type="journal article" date="2008" name="Antimicrob. Agents Chemother.">
        <title>Mutated response regulator graR is responsible for phenotypic conversion of Staphylococcus aureus from heterogeneous vancomycin-intermediate resistance to vancomycin-intermediate resistance.</title>
        <authorList>
            <person name="Neoh H.-M."/>
            <person name="Cui L."/>
            <person name="Yuzawa H."/>
            <person name="Takeuchi F."/>
            <person name="Matsuo M."/>
            <person name="Hiramatsu K."/>
        </authorList>
    </citation>
    <scope>NUCLEOTIDE SEQUENCE [LARGE SCALE GENOMIC DNA]</scope>
    <source>
        <strain>Mu3 / ATCC 700698</strain>
    </source>
</reference>
<gene>
    <name evidence="1" type="primary">argG</name>
    <name type="ordered locus">SAHV_0956</name>
</gene>
<feature type="chain" id="PRO_1000000438" description="Argininosuccinate synthase">
    <location>
        <begin position="1"/>
        <end position="401"/>
    </location>
</feature>
<feature type="binding site" evidence="1">
    <location>
        <begin position="8"/>
        <end position="16"/>
    </location>
    <ligand>
        <name>ATP</name>
        <dbReference type="ChEBI" id="CHEBI:30616"/>
    </ligand>
</feature>
<feature type="binding site" evidence="1">
    <location>
        <position position="85"/>
    </location>
    <ligand>
        <name>L-citrulline</name>
        <dbReference type="ChEBI" id="CHEBI:57743"/>
    </ligand>
</feature>
<feature type="binding site" evidence="1">
    <location>
        <position position="115"/>
    </location>
    <ligand>
        <name>ATP</name>
        <dbReference type="ChEBI" id="CHEBI:30616"/>
    </ligand>
</feature>
<feature type="binding site" evidence="1">
    <location>
        <position position="117"/>
    </location>
    <ligand>
        <name>L-aspartate</name>
        <dbReference type="ChEBI" id="CHEBI:29991"/>
    </ligand>
</feature>
<feature type="binding site" evidence="1">
    <location>
        <position position="121"/>
    </location>
    <ligand>
        <name>L-aspartate</name>
        <dbReference type="ChEBI" id="CHEBI:29991"/>
    </ligand>
</feature>
<feature type="binding site" evidence="1">
    <location>
        <position position="121"/>
    </location>
    <ligand>
        <name>L-citrulline</name>
        <dbReference type="ChEBI" id="CHEBI:57743"/>
    </ligand>
</feature>
<feature type="binding site" evidence="1">
    <location>
        <position position="122"/>
    </location>
    <ligand>
        <name>L-aspartate</name>
        <dbReference type="ChEBI" id="CHEBI:29991"/>
    </ligand>
</feature>
<feature type="binding site" evidence="1">
    <location>
        <position position="125"/>
    </location>
    <ligand>
        <name>L-citrulline</name>
        <dbReference type="ChEBI" id="CHEBI:57743"/>
    </ligand>
</feature>
<feature type="binding site" evidence="1">
    <location>
        <position position="173"/>
    </location>
    <ligand>
        <name>L-citrulline</name>
        <dbReference type="ChEBI" id="CHEBI:57743"/>
    </ligand>
</feature>
<feature type="binding site" evidence="1">
    <location>
        <position position="258"/>
    </location>
    <ligand>
        <name>L-citrulline</name>
        <dbReference type="ChEBI" id="CHEBI:57743"/>
    </ligand>
</feature>
<feature type="binding site" evidence="1">
    <location>
        <position position="270"/>
    </location>
    <ligand>
        <name>L-citrulline</name>
        <dbReference type="ChEBI" id="CHEBI:57743"/>
    </ligand>
</feature>
<evidence type="ECO:0000255" key="1">
    <source>
        <dbReference type="HAMAP-Rule" id="MF_00005"/>
    </source>
</evidence>
<accession>A7X0H5</accession>
<sequence>MKEKIVLAYSGGLDTSVAVQWLIDKGYDVVACCLDVGEGKDLDIVYKKALDMGAVECHIIDATKEFSDEYVSYAIKGNLMYENAYPLVSALSRPLIAKKLVEIAEKTNSVGIAHGCTGKGNDQVRFEVAIKALNPSLKAFAPVREWAWSREEEIDYAIKHNIPVSINHDSPYSIDQNLWGRANECGILEDPYAAPPEDAFDLTNALEETPDTADEIILTFDKGIPVQIDGKTYELDDLILTLNALAGKHGIGRIDHVENRLVGIKSREIYEAPAAEVILKAHKALETITLTKDVAHFKPIIEKQFAEQLYNGLWFSPLTDSLKLFIDSTQQYVSGDVRIKLFKGNAIVNGRKSPYTLYDEKLATYTKEDAFNQDAAVGFIDIYGLPTQVNAMLHGGYSNEQ</sequence>
<organism>
    <name type="scientific">Staphylococcus aureus (strain Mu3 / ATCC 700698)</name>
    <dbReference type="NCBI Taxonomy" id="418127"/>
    <lineage>
        <taxon>Bacteria</taxon>
        <taxon>Bacillati</taxon>
        <taxon>Bacillota</taxon>
        <taxon>Bacilli</taxon>
        <taxon>Bacillales</taxon>
        <taxon>Staphylococcaceae</taxon>
        <taxon>Staphylococcus</taxon>
    </lineage>
</organism>
<proteinExistence type="inferred from homology"/>
<dbReference type="EC" id="6.3.4.5" evidence="1"/>
<dbReference type="EMBL" id="AP009324">
    <property type="protein sequence ID" value="BAF77839.1"/>
    <property type="molecule type" value="Genomic_DNA"/>
</dbReference>
<dbReference type="RefSeq" id="WP_000660045.1">
    <property type="nucleotide sequence ID" value="NZ_CTYB01000024.1"/>
</dbReference>
<dbReference type="SMR" id="A7X0H5"/>
<dbReference type="KEGG" id="saw:SAHV_0956"/>
<dbReference type="HOGENOM" id="CLU_032784_4_2_9"/>
<dbReference type="UniPathway" id="UPA00068">
    <property type="reaction ID" value="UER00113"/>
</dbReference>
<dbReference type="GO" id="GO:0005737">
    <property type="term" value="C:cytoplasm"/>
    <property type="evidence" value="ECO:0007669"/>
    <property type="project" value="UniProtKB-SubCell"/>
</dbReference>
<dbReference type="GO" id="GO:0004055">
    <property type="term" value="F:argininosuccinate synthase activity"/>
    <property type="evidence" value="ECO:0007669"/>
    <property type="project" value="UniProtKB-UniRule"/>
</dbReference>
<dbReference type="GO" id="GO:0005524">
    <property type="term" value="F:ATP binding"/>
    <property type="evidence" value="ECO:0007669"/>
    <property type="project" value="UniProtKB-UniRule"/>
</dbReference>
<dbReference type="GO" id="GO:0000053">
    <property type="term" value="P:argininosuccinate metabolic process"/>
    <property type="evidence" value="ECO:0007669"/>
    <property type="project" value="TreeGrafter"/>
</dbReference>
<dbReference type="GO" id="GO:0006526">
    <property type="term" value="P:L-arginine biosynthetic process"/>
    <property type="evidence" value="ECO:0007669"/>
    <property type="project" value="UniProtKB-UniRule"/>
</dbReference>
<dbReference type="GO" id="GO:0000050">
    <property type="term" value="P:urea cycle"/>
    <property type="evidence" value="ECO:0007669"/>
    <property type="project" value="TreeGrafter"/>
</dbReference>
<dbReference type="CDD" id="cd01999">
    <property type="entry name" value="ASS"/>
    <property type="match status" value="1"/>
</dbReference>
<dbReference type="FunFam" id="1.20.5.470:FF:000002">
    <property type="entry name" value="Argininosuccinate synthase"/>
    <property type="match status" value="1"/>
</dbReference>
<dbReference type="FunFam" id="3.40.50.620:FF:000038">
    <property type="entry name" value="Argininosuccinate synthase"/>
    <property type="match status" value="1"/>
</dbReference>
<dbReference type="FunFam" id="3.90.1260.10:FF:000007">
    <property type="entry name" value="Argininosuccinate synthase"/>
    <property type="match status" value="1"/>
</dbReference>
<dbReference type="Gene3D" id="3.90.1260.10">
    <property type="entry name" value="Argininosuccinate synthetase, chain A, domain 2"/>
    <property type="match status" value="1"/>
</dbReference>
<dbReference type="Gene3D" id="3.40.50.620">
    <property type="entry name" value="HUPs"/>
    <property type="match status" value="1"/>
</dbReference>
<dbReference type="Gene3D" id="1.20.5.470">
    <property type="entry name" value="Single helix bin"/>
    <property type="match status" value="1"/>
</dbReference>
<dbReference type="HAMAP" id="MF_00005">
    <property type="entry name" value="Arg_succ_synth_type1"/>
    <property type="match status" value="1"/>
</dbReference>
<dbReference type="InterPro" id="IPR048268">
    <property type="entry name" value="Arginosuc_syn_C"/>
</dbReference>
<dbReference type="InterPro" id="IPR048267">
    <property type="entry name" value="Arginosuc_syn_N"/>
</dbReference>
<dbReference type="InterPro" id="IPR001518">
    <property type="entry name" value="Arginosuc_synth"/>
</dbReference>
<dbReference type="InterPro" id="IPR018223">
    <property type="entry name" value="Arginosuc_synth_CS"/>
</dbReference>
<dbReference type="InterPro" id="IPR023434">
    <property type="entry name" value="Arginosuc_synth_type_1_subfam"/>
</dbReference>
<dbReference type="InterPro" id="IPR024074">
    <property type="entry name" value="AS_cat/multimer_dom_body"/>
</dbReference>
<dbReference type="InterPro" id="IPR014729">
    <property type="entry name" value="Rossmann-like_a/b/a_fold"/>
</dbReference>
<dbReference type="NCBIfam" id="TIGR00032">
    <property type="entry name" value="argG"/>
    <property type="match status" value="1"/>
</dbReference>
<dbReference type="NCBIfam" id="NF001770">
    <property type="entry name" value="PRK00509.1"/>
    <property type="match status" value="1"/>
</dbReference>
<dbReference type="PANTHER" id="PTHR11587">
    <property type="entry name" value="ARGININOSUCCINATE SYNTHASE"/>
    <property type="match status" value="1"/>
</dbReference>
<dbReference type="PANTHER" id="PTHR11587:SF2">
    <property type="entry name" value="ARGININOSUCCINATE SYNTHASE"/>
    <property type="match status" value="1"/>
</dbReference>
<dbReference type="Pfam" id="PF20979">
    <property type="entry name" value="Arginosuc_syn_C"/>
    <property type="match status" value="1"/>
</dbReference>
<dbReference type="Pfam" id="PF00764">
    <property type="entry name" value="Arginosuc_synth"/>
    <property type="match status" value="1"/>
</dbReference>
<dbReference type="SUPFAM" id="SSF52402">
    <property type="entry name" value="Adenine nucleotide alpha hydrolases-like"/>
    <property type="match status" value="1"/>
</dbReference>
<dbReference type="SUPFAM" id="SSF69864">
    <property type="entry name" value="Argininosuccinate synthetase, C-terminal domain"/>
    <property type="match status" value="1"/>
</dbReference>
<dbReference type="PROSITE" id="PS00564">
    <property type="entry name" value="ARGININOSUCCIN_SYN_1"/>
    <property type="match status" value="1"/>
</dbReference>
<dbReference type="PROSITE" id="PS00565">
    <property type="entry name" value="ARGININOSUCCIN_SYN_2"/>
    <property type="match status" value="1"/>
</dbReference>
<protein>
    <recommendedName>
        <fullName evidence="1">Argininosuccinate synthase</fullName>
        <ecNumber evidence="1">6.3.4.5</ecNumber>
    </recommendedName>
    <alternativeName>
        <fullName evidence="1">Citrulline--aspartate ligase</fullName>
    </alternativeName>
</protein>